<sequence>MNLHEYQGKQLFAEYGLPVSKGFAVDTPEQAAEACDKIGGSEWVVKAQVHAGGRGKAGGVKLVRSKEDAKAFAAQWLGKNLVTYQTDANGQPVSKILVESCTDIAKELYLGAVVDRSSRRIVFMASTEGGVDIEKVAHETPEKILKATIDPLVGAQPFQGRELAFQLGLEGKQVQQFAKIFVGLAKLFKDHDLALLEVNPLVIKADGDLHCLDAKINIDANAMYRQPKLKTFHDPSQDDAREAHAAKFELNYVALEGNIGCMVNGAGLAMGTMDIVNLHGGKPANFLDVGGGATKERVTEAFKIILSDSNVAAVLVNIFGGIVRCDMIAEGIIGAVKEVGVKVPVVVRLEGNNAELGAKVLAESGLNIIAATSLTDAAQQVVKAAEGK</sequence>
<keyword id="KW-0067">ATP-binding</keyword>
<keyword id="KW-0436">Ligase</keyword>
<keyword id="KW-0460">Magnesium</keyword>
<keyword id="KW-0479">Metal-binding</keyword>
<keyword id="KW-0547">Nucleotide-binding</keyword>
<keyword id="KW-0816">Tricarboxylic acid cycle</keyword>
<protein>
    <recommendedName>
        <fullName evidence="1">Succinate--CoA ligase [ADP-forming] subunit beta</fullName>
        <ecNumber evidence="1">6.2.1.5</ecNumber>
    </recommendedName>
    <alternativeName>
        <fullName evidence="1">Succinyl-CoA synthetase subunit beta</fullName>
        <shortName evidence="1">SCS-beta</shortName>
    </alternativeName>
</protein>
<name>SUCC_PSEE4</name>
<dbReference type="EC" id="6.2.1.5" evidence="1"/>
<dbReference type="EMBL" id="CT573326">
    <property type="protein sequence ID" value="CAK16366.1"/>
    <property type="molecule type" value="Genomic_DNA"/>
</dbReference>
<dbReference type="RefSeq" id="WP_011534748.1">
    <property type="nucleotide sequence ID" value="NC_008027.1"/>
</dbReference>
<dbReference type="SMR" id="Q1I7L3"/>
<dbReference type="STRING" id="384676.PSEEN3636"/>
<dbReference type="GeneID" id="93543384"/>
<dbReference type="KEGG" id="pen:PSEEN3636"/>
<dbReference type="eggNOG" id="COG0045">
    <property type="taxonomic scope" value="Bacteria"/>
</dbReference>
<dbReference type="HOGENOM" id="CLU_037430_0_2_6"/>
<dbReference type="OrthoDB" id="9802602at2"/>
<dbReference type="UniPathway" id="UPA00223">
    <property type="reaction ID" value="UER00999"/>
</dbReference>
<dbReference type="Proteomes" id="UP000000658">
    <property type="component" value="Chromosome"/>
</dbReference>
<dbReference type="GO" id="GO:0005829">
    <property type="term" value="C:cytosol"/>
    <property type="evidence" value="ECO:0007669"/>
    <property type="project" value="TreeGrafter"/>
</dbReference>
<dbReference type="GO" id="GO:0042709">
    <property type="term" value="C:succinate-CoA ligase complex"/>
    <property type="evidence" value="ECO:0007669"/>
    <property type="project" value="TreeGrafter"/>
</dbReference>
<dbReference type="GO" id="GO:0005524">
    <property type="term" value="F:ATP binding"/>
    <property type="evidence" value="ECO:0007669"/>
    <property type="project" value="UniProtKB-UniRule"/>
</dbReference>
<dbReference type="GO" id="GO:0000287">
    <property type="term" value="F:magnesium ion binding"/>
    <property type="evidence" value="ECO:0007669"/>
    <property type="project" value="UniProtKB-UniRule"/>
</dbReference>
<dbReference type="GO" id="GO:0004775">
    <property type="term" value="F:succinate-CoA ligase (ADP-forming) activity"/>
    <property type="evidence" value="ECO:0007669"/>
    <property type="project" value="UniProtKB-UniRule"/>
</dbReference>
<dbReference type="GO" id="GO:0004776">
    <property type="term" value="F:succinate-CoA ligase (GDP-forming) activity"/>
    <property type="evidence" value="ECO:0007669"/>
    <property type="project" value="RHEA"/>
</dbReference>
<dbReference type="GO" id="GO:0006104">
    <property type="term" value="P:succinyl-CoA metabolic process"/>
    <property type="evidence" value="ECO:0007669"/>
    <property type="project" value="TreeGrafter"/>
</dbReference>
<dbReference type="GO" id="GO:0006099">
    <property type="term" value="P:tricarboxylic acid cycle"/>
    <property type="evidence" value="ECO:0007669"/>
    <property type="project" value="UniProtKB-UniRule"/>
</dbReference>
<dbReference type="FunFam" id="3.30.1490.20:FF:000002">
    <property type="entry name" value="Succinate--CoA ligase [ADP-forming] subunit beta"/>
    <property type="match status" value="1"/>
</dbReference>
<dbReference type="FunFam" id="3.30.470.20:FF:000002">
    <property type="entry name" value="Succinate--CoA ligase [ADP-forming] subunit beta"/>
    <property type="match status" value="1"/>
</dbReference>
<dbReference type="FunFam" id="3.40.50.261:FF:000001">
    <property type="entry name" value="Succinate--CoA ligase [ADP-forming] subunit beta"/>
    <property type="match status" value="1"/>
</dbReference>
<dbReference type="Gene3D" id="3.30.1490.20">
    <property type="entry name" value="ATP-grasp fold, A domain"/>
    <property type="match status" value="1"/>
</dbReference>
<dbReference type="Gene3D" id="3.30.470.20">
    <property type="entry name" value="ATP-grasp fold, B domain"/>
    <property type="match status" value="1"/>
</dbReference>
<dbReference type="Gene3D" id="3.40.50.261">
    <property type="entry name" value="Succinyl-CoA synthetase domains"/>
    <property type="match status" value="1"/>
</dbReference>
<dbReference type="HAMAP" id="MF_00558">
    <property type="entry name" value="Succ_CoA_beta"/>
    <property type="match status" value="1"/>
</dbReference>
<dbReference type="InterPro" id="IPR011761">
    <property type="entry name" value="ATP-grasp"/>
</dbReference>
<dbReference type="InterPro" id="IPR013650">
    <property type="entry name" value="ATP-grasp_succ-CoA_synth-type"/>
</dbReference>
<dbReference type="InterPro" id="IPR013815">
    <property type="entry name" value="ATP_grasp_subdomain_1"/>
</dbReference>
<dbReference type="InterPro" id="IPR017866">
    <property type="entry name" value="Succ-CoA_synthase_bsu_CS"/>
</dbReference>
<dbReference type="InterPro" id="IPR005811">
    <property type="entry name" value="SUCC_ACL_C"/>
</dbReference>
<dbReference type="InterPro" id="IPR005809">
    <property type="entry name" value="Succ_CoA_ligase-like_bsu"/>
</dbReference>
<dbReference type="InterPro" id="IPR016102">
    <property type="entry name" value="Succinyl-CoA_synth-like"/>
</dbReference>
<dbReference type="NCBIfam" id="NF001913">
    <property type="entry name" value="PRK00696.1"/>
    <property type="match status" value="1"/>
</dbReference>
<dbReference type="NCBIfam" id="TIGR01016">
    <property type="entry name" value="sucCoAbeta"/>
    <property type="match status" value="1"/>
</dbReference>
<dbReference type="PANTHER" id="PTHR11815:SF10">
    <property type="entry name" value="SUCCINATE--COA LIGASE [GDP-FORMING] SUBUNIT BETA, MITOCHONDRIAL"/>
    <property type="match status" value="1"/>
</dbReference>
<dbReference type="PANTHER" id="PTHR11815">
    <property type="entry name" value="SUCCINYL-COA SYNTHETASE BETA CHAIN"/>
    <property type="match status" value="1"/>
</dbReference>
<dbReference type="Pfam" id="PF08442">
    <property type="entry name" value="ATP-grasp_2"/>
    <property type="match status" value="1"/>
</dbReference>
<dbReference type="Pfam" id="PF00549">
    <property type="entry name" value="Ligase_CoA"/>
    <property type="match status" value="1"/>
</dbReference>
<dbReference type="PIRSF" id="PIRSF001554">
    <property type="entry name" value="SucCS_beta"/>
    <property type="match status" value="1"/>
</dbReference>
<dbReference type="SUPFAM" id="SSF56059">
    <property type="entry name" value="Glutathione synthetase ATP-binding domain-like"/>
    <property type="match status" value="1"/>
</dbReference>
<dbReference type="SUPFAM" id="SSF52210">
    <property type="entry name" value="Succinyl-CoA synthetase domains"/>
    <property type="match status" value="1"/>
</dbReference>
<dbReference type="PROSITE" id="PS50975">
    <property type="entry name" value="ATP_GRASP"/>
    <property type="match status" value="1"/>
</dbReference>
<dbReference type="PROSITE" id="PS01217">
    <property type="entry name" value="SUCCINYL_COA_LIG_3"/>
    <property type="match status" value="1"/>
</dbReference>
<reference key="1">
    <citation type="journal article" date="2006" name="Nat. Biotechnol.">
        <title>Complete genome sequence of the entomopathogenic and metabolically versatile soil bacterium Pseudomonas entomophila.</title>
        <authorList>
            <person name="Vodovar N."/>
            <person name="Vallenet D."/>
            <person name="Cruveiller S."/>
            <person name="Rouy Z."/>
            <person name="Barbe V."/>
            <person name="Acosta C."/>
            <person name="Cattolico L."/>
            <person name="Jubin C."/>
            <person name="Lajus A."/>
            <person name="Segurens B."/>
            <person name="Vacherie B."/>
            <person name="Wincker P."/>
            <person name="Weissenbach J."/>
            <person name="Lemaitre B."/>
            <person name="Medigue C."/>
            <person name="Boccard F."/>
        </authorList>
    </citation>
    <scope>NUCLEOTIDE SEQUENCE [LARGE SCALE GENOMIC DNA]</scope>
    <source>
        <strain>L48</strain>
    </source>
</reference>
<organism>
    <name type="scientific">Pseudomonas entomophila (strain L48)</name>
    <dbReference type="NCBI Taxonomy" id="384676"/>
    <lineage>
        <taxon>Bacteria</taxon>
        <taxon>Pseudomonadati</taxon>
        <taxon>Pseudomonadota</taxon>
        <taxon>Gammaproteobacteria</taxon>
        <taxon>Pseudomonadales</taxon>
        <taxon>Pseudomonadaceae</taxon>
        <taxon>Pseudomonas</taxon>
    </lineage>
</organism>
<accession>Q1I7L3</accession>
<evidence type="ECO:0000255" key="1">
    <source>
        <dbReference type="HAMAP-Rule" id="MF_00558"/>
    </source>
</evidence>
<proteinExistence type="inferred from homology"/>
<feature type="chain" id="PRO_1000082167" description="Succinate--CoA ligase [ADP-forming] subunit beta">
    <location>
        <begin position="1"/>
        <end position="388"/>
    </location>
</feature>
<feature type="domain" description="ATP-grasp" evidence="1">
    <location>
        <begin position="9"/>
        <end position="244"/>
    </location>
</feature>
<feature type="binding site" evidence="1">
    <location>
        <position position="46"/>
    </location>
    <ligand>
        <name>ATP</name>
        <dbReference type="ChEBI" id="CHEBI:30616"/>
    </ligand>
</feature>
<feature type="binding site" evidence="1">
    <location>
        <begin position="53"/>
        <end position="55"/>
    </location>
    <ligand>
        <name>ATP</name>
        <dbReference type="ChEBI" id="CHEBI:30616"/>
    </ligand>
</feature>
<feature type="binding site" evidence="1">
    <location>
        <position position="99"/>
    </location>
    <ligand>
        <name>ATP</name>
        <dbReference type="ChEBI" id="CHEBI:30616"/>
    </ligand>
</feature>
<feature type="binding site" evidence="1">
    <location>
        <position position="102"/>
    </location>
    <ligand>
        <name>ATP</name>
        <dbReference type="ChEBI" id="CHEBI:30616"/>
    </ligand>
</feature>
<feature type="binding site" evidence="1">
    <location>
        <position position="107"/>
    </location>
    <ligand>
        <name>ATP</name>
        <dbReference type="ChEBI" id="CHEBI:30616"/>
    </ligand>
</feature>
<feature type="binding site" evidence="1">
    <location>
        <position position="199"/>
    </location>
    <ligand>
        <name>Mg(2+)</name>
        <dbReference type="ChEBI" id="CHEBI:18420"/>
    </ligand>
</feature>
<feature type="binding site" evidence="1">
    <location>
        <position position="213"/>
    </location>
    <ligand>
        <name>Mg(2+)</name>
        <dbReference type="ChEBI" id="CHEBI:18420"/>
    </ligand>
</feature>
<feature type="binding site" evidence="1">
    <location>
        <position position="264"/>
    </location>
    <ligand>
        <name>substrate</name>
        <note>ligand shared with subunit alpha</note>
    </ligand>
</feature>
<feature type="binding site" evidence="1">
    <location>
        <begin position="321"/>
        <end position="323"/>
    </location>
    <ligand>
        <name>substrate</name>
        <note>ligand shared with subunit alpha</note>
    </ligand>
</feature>
<gene>
    <name evidence="1" type="primary">sucC</name>
    <name type="ordered locus">PSEEN3636</name>
</gene>
<comment type="function">
    <text evidence="1">Succinyl-CoA synthetase functions in the citric acid cycle (TCA), coupling the hydrolysis of succinyl-CoA to the synthesis of either ATP or GTP and thus represents the only step of substrate-level phosphorylation in the TCA. The beta subunit provides nucleotide specificity of the enzyme and binds the substrate succinate, while the binding sites for coenzyme A and phosphate are found in the alpha subunit.</text>
</comment>
<comment type="catalytic activity">
    <reaction evidence="1">
        <text>succinate + ATP + CoA = succinyl-CoA + ADP + phosphate</text>
        <dbReference type="Rhea" id="RHEA:17661"/>
        <dbReference type="ChEBI" id="CHEBI:30031"/>
        <dbReference type="ChEBI" id="CHEBI:30616"/>
        <dbReference type="ChEBI" id="CHEBI:43474"/>
        <dbReference type="ChEBI" id="CHEBI:57287"/>
        <dbReference type="ChEBI" id="CHEBI:57292"/>
        <dbReference type="ChEBI" id="CHEBI:456216"/>
        <dbReference type="EC" id="6.2.1.5"/>
    </reaction>
    <physiologicalReaction direction="right-to-left" evidence="1">
        <dbReference type="Rhea" id="RHEA:17663"/>
    </physiologicalReaction>
</comment>
<comment type="catalytic activity">
    <reaction evidence="1">
        <text>GTP + succinate + CoA = succinyl-CoA + GDP + phosphate</text>
        <dbReference type="Rhea" id="RHEA:22120"/>
        <dbReference type="ChEBI" id="CHEBI:30031"/>
        <dbReference type="ChEBI" id="CHEBI:37565"/>
        <dbReference type="ChEBI" id="CHEBI:43474"/>
        <dbReference type="ChEBI" id="CHEBI:57287"/>
        <dbReference type="ChEBI" id="CHEBI:57292"/>
        <dbReference type="ChEBI" id="CHEBI:58189"/>
    </reaction>
    <physiologicalReaction direction="right-to-left" evidence="1">
        <dbReference type="Rhea" id="RHEA:22122"/>
    </physiologicalReaction>
</comment>
<comment type="cofactor">
    <cofactor evidence="1">
        <name>Mg(2+)</name>
        <dbReference type="ChEBI" id="CHEBI:18420"/>
    </cofactor>
    <text evidence="1">Binds 1 Mg(2+) ion per subunit.</text>
</comment>
<comment type="pathway">
    <text evidence="1">Carbohydrate metabolism; tricarboxylic acid cycle; succinate from succinyl-CoA (ligase route): step 1/1.</text>
</comment>
<comment type="subunit">
    <text evidence="1">Heterotetramer of two alpha and two beta subunits.</text>
</comment>
<comment type="similarity">
    <text evidence="1">Belongs to the succinate/malate CoA ligase beta subunit family.</text>
</comment>